<evidence type="ECO:0000250" key="1">
    <source>
        <dbReference type="UniProtKB" id="O75838"/>
    </source>
</evidence>
<evidence type="ECO:0000250" key="2">
    <source>
        <dbReference type="UniProtKB" id="Q9Z309"/>
    </source>
</evidence>
<evidence type="ECO:0000255" key="3">
    <source>
        <dbReference type="PROSITE-ProRule" id="PRU00448"/>
    </source>
</evidence>
<evidence type="ECO:0000269" key="4">
    <source>
    </source>
</evidence>
<comment type="function">
    <text evidence="1 2">Calcium- and integrin-binding protein that plays a role in intracellular calcium homeostasis (By similarity). Acts as an auxiliary subunit of the sensory mechanoelectrical transduction (MET) channel in hair cells (By similarity). Essential for mechanoelectrical transduction (MET) currents in auditory hair cells and thereby required for hearing (By similarity). Regulates the function of hair cell mechanotransduction by controlling the distribution of transmembrane channel-like proteins TMC1 and TMC2, and by regulating the function of the MET channels in hair cells (By similarity). Required for the maintenance of auditory hair cell stereocilia bundle morphology and function and for hair-cell survival in the cochlea (By similarity). Critical for proper photoreceptor cell maintenance and function (By similarity). Plays a role in intracellular calcium homeostasis by decreasing ATP-induced calcium release (By similarity).</text>
</comment>
<comment type="subunit">
    <text evidence="1 2">Monomer (By similarity). Homodimer (By similarity). Interacts with WHRN and MYO7A (By similarity). Interacts with ITGA2B (via C-terminus cytoplasmic tail region); the interactions are stabilized/increased in a calcium and magnesium-dependent manner (By similarity). Interacts with ITGA7 (via C-terminus cytoplasmic tail region); the interactions are stabilized/increased in a calcium and magnesium-dependent manner (By similarity). Interacts with TMC1 (By similarity). Interacts with TMC2 (By similarity).</text>
</comment>
<comment type="subcellular location">
    <subcellularLocation>
        <location evidence="2">Cytoplasm</location>
    </subcellularLocation>
    <subcellularLocation>
        <location evidence="1">Cell projection</location>
        <location evidence="1">Stereocilium</location>
    </subcellularLocation>
    <subcellularLocation>
        <location evidence="2">Photoreceptor inner segment</location>
    </subcellularLocation>
    <subcellularLocation>
        <location evidence="2">Cell projection</location>
        <location evidence="2">Cilium</location>
        <location evidence="2">Photoreceptor outer segment</location>
    </subcellularLocation>
    <subcellularLocation>
        <location evidence="2">Cell membrane</location>
        <location evidence="2">Sarcolemma</location>
    </subcellularLocation>
    <text evidence="1 2">Colocalizes with ITGA7 at the myotendinous junctions (MTJ) and at the neuromuscular junctions (NMJ) (By similarity). Located mainly in stereocilia and at the apical surface of hair cells of the cochlea (By similarity). Localizes in the cuticular plate along and at the tip of the stereocilia of vestibular sensory hair cells (By similarity).</text>
</comment>
<comment type="tissue specificity">
    <text evidence="4">Expressed in liver, heart, kidney, brain, spleen, stomach, ovary, testis and muscle (PubMed:18989754).</text>
</comment>
<comment type="miscellaneous">
    <text evidence="1">The binding of either calcium or magnesium significantly increases the structural stability of the protein in comparison to apo-CIB (calcium- and magnesium-free form).</text>
</comment>
<organism>
    <name type="scientific">Ovis aries</name>
    <name type="common">Sheep</name>
    <dbReference type="NCBI Taxonomy" id="9940"/>
    <lineage>
        <taxon>Eukaryota</taxon>
        <taxon>Metazoa</taxon>
        <taxon>Chordata</taxon>
        <taxon>Craniata</taxon>
        <taxon>Vertebrata</taxon>
        <taxon>Euteleostomi</taxon>
        <taxon>Mammalia</taxon>
        <taxon>Eutheria</taxon>
        <taxon>Laurasiatheria</taxon>
        <taxon>Artiodactyla</taxon>
        <taxon>Ruminantia</taxon>
        <taxon>Pecora</taxon>
        <taxon>Bovidae</taxon>
        <taxon>Caprinae</taxon>
        <taxon>Ovis</taxon>
    </lineage>
</organism>
<dbReference type="EMBL" id="FJ039530">
    <property type="protein sequence ID" value="ACM89972.1"/>
    <property type="molecule type" value="mRNA"/>
</dbReference>
<dbReference type="SMR" id="C7A276"/>
<dbReference type="STRING" id="9940.ENSOARP00000000542"/>
<dbReference type="PaxDb" id="9940-ENSOARP00000000542"/>
<dbReference type="eggNOG" id="KOG0038">
    <property type="taxonomic scope" value="Eukaryota"/>
</dbReference>
<dbReference type="OrthoDB" id="114727at2759"/>
<dbReference type="Proteomes" id="UP000002356">
    <property type="component" value="Unplaced"/>
</dbReference>
<dbReference type="GO" id="GO:0032437">
    <property type="term" value="C:cuticular plate"/>
    <property type="evidence" value="ECO:0000250"/>
    <property type="project" value="UniProtKB"/>
</dbReference>
<dbReference type="GO" id="GO:0005737">
    <property type="term" value="C:cytoplasm"/>
    <property type="evidence" value="ECO:0000250"/>
    <property type="project" value="UniProtKB"/>
</dbReference>
<dbReference type="GO" id="GO:0001917">
    <property type="term" value="C:photoreceptor inner segment"/>
    <property type="evidence" value="ECO:0000250"/>
    <property type="project" value="UniProtKB"/>
</dbReference>
<dbReference type="GO" id="GO:0001750">
    <property type="term" value="C:photoreceptor outer segment"/>
    <property type="evidence" value="ECO:0000250"/>
    <property type="project" value="UniProtKB"/>
</dbReference>
<dbReference type="GO" id="GO:0042383">
    <property type="term" value="C:sarcolemma"/>
    <property type="evidence" value="ECO:0007669"/>
    <property type="project" value="UniProtKB-SubCell"/>
</dbReference>
<dbReference type="GO" id="GO:0032420">
    <property type="term" value="C:stereocilium"/>
    <property type="evidence" value="ECO:0000250"/>
    <property type="project" value="UniProtKB"/>
</dbReference>
<dbReference type="GO" id="GO:0005509">
    <property type="term" value="F:calcium ion binding"/>
    <property type="evidence" value="ECO:0000250"/>
    <property type="project" value="UniProtKB"/>
</dbReference>
<dbReference type="GO" id="GO:0000287">
    <property type="term" value="F:magnesium ion binding"/>
    <property type="evidence" value="ECO:0000250"/>
    <property type="project" value="UniProtKB"/>
</dbReference>
<dbReference type="GO" id="GO:0042803">
    <property type="term" value="F:protein homodimerization activity"/>
    <property type="evidence" value="ECO:0000250"/>
    <property type="project" value="UniProtKB"/>
</dbReference>
<dbReference type="GO" id="GO:0055074">
    <property type="term" value="P:calcium ion homeostasis"/>
    <property type="evidence" value="ECO:0007669"/>
    <property type="project" value="TreeGrafter"/>
</dbReference>
<dbReference type="GO" id="GO:0071318">
    <property type="term" value="P:cellular response to ATP"/>
    <property type="evidence" value="ECO:0000250"/>
    <property type="project" value="UniProtKB"/>
</dbReference>
<dbReference type="GO" id="GO:0007204">
    <property type="term" value="P:positive regulation of cytosolic calcium ion concentration"/>
    <property type="evidence" value="ECO:0000250"/>
    <property type="project" value="UniProtKB"/>
</dbReference>
<dbReference type="CDD" id="cd00051">
    <property type="entry name" value="EFh"/>
    <property type="match status" value="1"/>
</dbReference>
<dbReference type="FunFam" id="1.10.238.10:FF:000035">
    <property type="entry name" value="Calcium and integrin-binding family member 2"/>
    <property type="match status" value="1"/>
</dbReference>
<dbReference type="Gene3D" id="1.10.238.10">
    <property type="entry name" value="EF-hand"/>
    <property type="match status" value="2"/>
</dbReference>
<dbReference type="InterPro" id="IPR051433">
    <property type="entry name" value="CIBP"/>
</dbReference>
<dbReference type="InterPro" id="IPR011992">
    <property type="entry name" value="EF-hand-dom_pair"/>
</dbReference>
<dbReference type="InterPro" id="IPR018247">
    <property type="entry name" value="EF_Hand_1_Ca_BS"/>
</dbReference>
<dbReference type="InterPro" id="IPR002048">
    <property type="entry name" value="EF_hand_dom"/>
</dbReference>
<dbReference type="PANTHER" id="PTHR45791">
    <property type="entry name" value="CALCIUM AND INTEGRIN BINDING FAMILY MEMBER 2"/>
    <property type="match status" value="1"/>
</dbReference>
<dbReference type="PANTHER" id="PTHR45791:SF5">
    <property type="entry name" value="CALCIUM AND INTEGRIN-BINDING FAMILY MEMBER 2"/>
    <property type="match status" value="1"/>
</dbReference>
<dbReference type="Pfam" id="PF13499">
    <property type="entry name" value="EF-hand_7"/>
    <property type="match status" value="1"/>
</dbReference>
<dbReference type="SMART" id="SM00054">
    <property type="entry name" value="EFh"/>
    <property type="match status" value="3"/>
</dbReference>
<dbReference type="SUPFAM" id="SSF47473">
    <property type="entry name" value="EF-hand"/>
    <property type="match status" value="1"/>
</dbReference>
<dbReference type="PROSITE" id="PS00018">
    <property type="entry name" value="EF_HAND_1"/>
    <property type="match status" value="2"/>
</dbReference>
<dbReference type="PROSITE" id="PS50222">
    <property type="entry name" value="EF_HAND_2"/>
    <property type="match status" value="3"/>
</dbReference>
<feature type="chain" id="PRO_0000425744" description="Calcium and integrin-binding family member 2">
    <location>
        <begin position="1" status="less than"/>
        <end position="176"/>
    </location>
</feature>
<feature type="domain" description="EF-hand 1" evidence="3">
    <location>
        <begin position="55"/>
        <end position="90"/>
    </location>
</feature>
<feature type="domain" description="EF-hand 2" evidence="3">
    <location>
        <begin position="92"/>
        <end position="127"/>
    </location>
</feature>
<feature type="domain" description="EF-hand 3" evidence="3">
    <location>
        <begin position="133"/>
        <end position="168"/>
    </location>
</feature>
<feature type="binding site" evidence="3">
    <location>
        <position position="105"/>
    </location>
    <ligand>
        <name>Ca(2+)</name>
        <dbReference type="ChEBI" id="CHEBI:29108"/>
        <label>1</label>
    </ligand>
</feature>
<feature type="binding site" evidence="3">
    <location>
        <position position="107"/>
    </location>
    <ligand>
        <name>Ca(2+)</name>
        <dbReference type="ChEBI" id="CHEBI:29108"/>
        <label>1</label>
    </ligand>
</feature>
<feature type="binding site" evidence="3">
    <location>
        <position position="109"/>
    </location>
    <ligand>
        <name>Ca(2+)</name>
        <dbReference type="ChEBI" id="CHEBI:29108"/>
        <label>1</label>
    </ligand>
</feature>
<feature type="binding site" evidence="3">
    <location>
        <position position="116"/>
    </location>
    <ligand>
        <name>Ca(2+)</name>
        <dbReference type="ChEBI" id="CHEBI:29108"/>
        <label>1</label>
    </ligand>
</feature>
<feature type="binding site" evidence="3">
    <location>
        <position position="146"/>
    </location>
    <ligand>
        <name>Ca(2+)</name>
        <dbReference type="ChEBI" id="CHEBI:29108"/>
        <label>2</label>
    </ligand>
</feature>
<feature type="binding site" evidence="3">
    <location>
        <position position="148"/>
    </location>
    <ligand>
        <name>Ca(2+)</name>
        <dbReference type="ChEBI" id="CHEBI:29108"/>
        <label>2</label>
    </ligand>
</feature>
<feature type="binding site" evidence="3">
    <location>
        <position position="150"/>
    </location>
    <ligand>
        <name>Ca(2+)</name>
        <dbReference type="ChEBI" id="CHEBI:29108"/>
        <label>2</label>
    </ligand>
</feature>
<feature type="binding site" evidence="3">
    <location>
        <position position="152"/>
    </location>
    <ligand>
        <name>Ca(2+)</name>
        <dbReference type="ChEBI" id="CHEBI:29108"/>
        <label>2</label>
    </ligand>
</feature>
<feature type="binding site" evidence="3">
    <location>
        <position position="157"/>
    </location>
    <ligand>
        <name>Ca(2+)</name>
        <dbReference type="ChEBI" id="CHEBI:29108"/>
        <label>2</label>
    </ligand>
</feature>
<feature type="non-terminal residue">
    <location>
        <position position="1"/>
    </location>
</feature>
<accession>C7A276</accession>
<proteinExistence type="evidence at transcript level"/>
<sequence>LFYRYQDCTFFNKKDILKLHARFYELAPNLVPMDYRKSPIVHVPMSLIIQMPELRENPFKERIVEAFSEDGEGNLTFNDFVDMFSVLCESAPRDLKASYAFKIYDFNTDNFICKEDLQLTLARLTKSELDEDEVVLVCDKVIEEADLDGDGKLGFADFEDMIAKAPDFLSTFHIRI</sequence>
<gene>
    <name type="primary">CIB2</name>
</gene>
<name>CIB2_SHEEP</name>
<keyword id="KW-0106">Calcium</keyword>
<keyword id="KW-1003">Cell membrane</keyword>
<keyword id="KW-0966">Cell projection</keyword>
<keyword id="KW-0963">Cytoplasm</keyword>
<keyword id="KW-0460">Magnesium</keyword>
<keyword id="KW-0472">Membrane</keyword>
<keyword id="KW-0479">Metal-binding</keyword>
<keyword id="KW-1185">Reference proteome</keyword>
<keyword id="KW-0677">Repeat</keyword>
<protein>
    <recommendedName>
        <fullName>Calcium and integrin-binding family member 2</fullName>
    </recommendedName>
</protein>
<reference key="1">
    <citation type="journal article" date="2009" name="Mol. Biol. Rep.">
        <title>Molecular characterization of the sheep CIB1 gene.</title>
        <authorList>
            <person name="Yu Y."/>
            <person name="Song X."/>
            <person name="Du L."/>
            <person name="Wang C."/>
        </authorList>
    </citation>
    <scope>NUCLEOTIDE SEQUENCE [MRNA]</scope>
    <scope>TISSUE SPECIFICITY</scope>
    <source>
        <tissue>Testis</tissue>
    </source>
</reference>